<dbReference type="EC" id="5.2.1.8"/>
<dbReference type="EMBL" id="AE000511">
    <property type="protein sequence ID" value="AAD07843.1"/>
    <property type="molecule type" value="Genomic_DNA"/>
</dbReference>
<dbReference type="PIR" id="C64619">
    <property type="entry name" value="C64619"/>
</dbReference>
<dbReference type="RefSeq" id="NP_207588.1">
    <property type="nucleotide sequence ID" value="NC_000915.1"/>
</dbReference>
<dbReference type="RefSeq" id="WP_001047731.1">
    <property type="nucleotide sequence ID" value="NC_018939.1"/>
</dbReference>
<dbReference type="SMR" id="P56420"/>
<dbReference type="DIP" id="DIP-3211N"/>
<dbReference type="FunCoup" id="P56420">
    <property type="interactions" value="437"/>
</dbReference>
<dbReference type="IntAct" id="P56420">
    <property type="interactions" value="5"/>
</dbReference>
<dbReference type="MINT" id="P56420"/>
<dbReference type="STRING" id="85962.HP_0795"/>
<dbReference type="PaxDb" id="85962-C694_04075"/>
<dbReference type="EnsemblBacteria" id="AAD07843">
    <property type="protein sequence ID" value="AAD07843"/>
    <property type="gene ID" value="HP_0795"/>
</dbReference>
<dbReference type="KEGG" id="heo:C694_04075"/>
<dbReference type="KEGG" id="hpy:HP_0795"/>
<dbReference type="PATRIC" id="fig|85962.47.peg.847"/>
<dbReference type="eggNOG" id="COG0544">
    <property type="taxonomic scope" value="Bacteria"/>
</dbReference>
<dbReference type="InParanoid" id="P56420"/>
<dbReference type="OrthoDB" id="9767721at2"/>
<dbReference type="PhylomeDB" id="P56420"/>
<dbReference type="Proteomes" id="UP000000429">
    <property type="component" value="Chromosome"/>
</dbReference>
<dbReference type="GO" id="GO:0005737">
    <property type="term" value="C:cytoplasm"/>
    <property type="evidence" value="ECO:0007669"/>
    <property type="project" value="UniProtKB-SubCell"/>
</dbReference>
<dbReference type="GO" id="GO:0003755">
    <property type="term" value="F:peptidyl-prolyl cis-trans isomerase activity"/>
    <property type="evidence" value="ECO:0000314"/>
    <property type="project" value="CACAO"/>
</dbReference>
<dbReference type="GO" id="GO:0044183">
    <property type="term" value="F:protein folding chaperone"/>
    <property type="evidence" value="ECO:0000318"/>
    <property type="project" value="GO_Central"/>
</dbReference>
<dbReference type="GO" id="GO:0043022">
    <property type="term" value="F:ribosome binding"/>
    <property type="evidence" value="ECO:0000318"/>
    <property type="project" value="GO_Central"/>
</dbReference>
<dbReference type="GO" id="GO:0051083">
    <property type="term" value="P:'de novo' cotranslational protein folding"/>
    <property type="evidence" value="ECO:0000318"/>
    <property type="project" value="GO_Central"/>
</dbReference>
<dbReference type="GO" id="GO:0051301">
    <property type="term" value="P:cell division"/>
    <property type="evidence" value="ECO:0007669"/>
    <property type="project" value="UniProtKB-KW"/>
</dbReference>
<dbReference type="GO" id="GO:0061077">
    <property type="term" value="P:chaperone-mediated protein folding"/>
    <property type="evidence" value="ECO:0000318"/>
    <property type="project" value="GO_Central"/>
</dbReference>
<dbReference type="GO" id="GO:0015031">
    <property type="term" value="P:protein transport"/>
    <property type="evidence" value="ECO:0007669"/>
    <property type="project" value="UniProtKB-UniRule"/>
</dbReference>
<dbReference type="GO" id="GO:0043335">
    <property type="term" value="P:protein unfolding"/>
    <property type="evidence" value="ECO:0000318"/>
    <property type="project" value="GO_Central"/>
</dbReference>
<dbReference type="FunFam" id="3.10.50.40:FF:000001">
    <property type="entry name" value="Trigger factor"/>
    <property type="match status" value="1"/>
</dbReference>
<dbReference type="FunFam" id="3.30.70.1050:FF:000010">
    <property type="entry name" value="Trigger factor"/>
    <property type="match status" value="1"/>
</dbReference>
<dbReference type="Gene3D" id="3.10.50.40">
    <property type="match status" value="1"/>
</dbReference>
<dbReference type="Gene3D" id="3.30.70.1050">
    <property type="entry name" value="Trigger factor ribosome-binding domain"/>
    <property type="match status" value="1"/>
</dbReference>
<dbReference type="Gene3D" id="1.10.3120.10">
    <property type="entry name" value="Trigger factor, C-terminal domain"/>
    <property type="match status" value="1"/>
</dbReference>
<dbReference type="HAMAP" id="MF_00303">
    <property type="entry name" value="Trigger_factor_Tig"/>
    <property type="match status" value="1"/>
</dbReference>
<dbReference type="InterPro" id="IPR046357">
    <property type="entry name" value="PPIase_dom_sf"/>
</dbReference>
<dbReference type="InterPro" id="IPR001179">
    <property type="entry name" value="PPIase_FKBP_dom"/>
</dbReference>
<dbReference type="InterPro" id="IPR005215">
    <property type="entry name" value="Trig_fac"/>
</dbReference>
<dbReference type="InterPro" id="IPR008880">
    <property type="entry name" value="Trigger_fac_C"/>
</dbReference>
<dbReference type="InterPro" id="IPR037041">
    <property type="entry name" value="Trigger_fac_C_sf"/>
</dbReference>
<dbReference type="InterPro" id="IPR008881">
    <property type="entry name" value="Trigger_fac_ribosome-bd_bac"/>
</dbReference>
<dbReference type="InterPro" id="IPR036611">
    <property type="entry name" value="Trigger_fac_ribosome-bd_sf"/>
</dbReference>
<dbReference type="InterPro" id="IPR027304">
    <property type="entry name" value="Trigger_fact/SurA_dom_sf"/>
</dbReference>
<dbReference type="NCBIfam" id="TIGR00115">
    <property type="entry name" value="tig"/>
    <property type="match status" value="1"/>
</dbReference>
<dbReference type="PANTHER" id="PTHR30560">
    <property type="entry name" value="TRIGGER FACTOR CHAPERONE AND PEPTIDYL-PROLYL CIS/TRANS ISOMERASE"/>
    <property type="match status" value="1"/>
</dbReference>
<dbReference type="PANTHER" id="PTHR30560:SF3">
    <property type="entry name" value="TRIGGER FACTOR-LIKE PROTEIN TIG, CHLOROPLASTIC"/>
    <property type="match status" value="1"/>
</dbReference>
<dbReference type="Pfam" id="PF00254">
    <property type="entry name" value="FKBP_C"/>
    <property type="match status" value="1"/>
</dbReference>
<dbReference type="Pfam" id="PF05698">
    <property type="entry name" value="Trigger_C"/>
    <property type="match status" value="1"/>
</dbReference>
<dbReference type="Pfam" id="PF05697">
    <property type="entry name" value="Trigger_N"/>
    <property type="match status" value="1"/>
</dbReference>
<dbReference type="PIRSF" id="PIRSF003095">
    <property type="entry name" value="Trigger_factor"/>
    <property type="match status" value="1"/>
</dbReference>
<dbReference type="SUPFAM" id="SSF54534">
    <property type="entry name" value="FKBP-like"/>
    <property type="match status" value="1"/>
</dbReference>
<dbReference type="SUPFAM" id="SSF109998">
    <property type="entry name" value="Triger factor/SurA peptide-binding domain-like"/>
    <property type="match status" value="1"/>
</dbReference>
<dbReference type="SUPFAM" id="SSF102735">
    <property type="entry name" value="Trigger factor ribosome-binding domain"/>
    <property type="match status" value="1"/>
</dbReference>
<dbReference type="PROSITE" id="PS50059">
    <property type="entry name" value="FKBP_PPIASE"/>
    <property type="match status" value="1"/>
</dbReference>
<reference key="1">
    <citation type="journal article" date="1997" name="Nature">
        <title>The complete genome sequence of the gastric pathogen Helicobacter pylori.</title>
        <authorList>
            <person name="Tomb J.-F."/>
            <person name="White O."/>
            <person name="Kerlavage A.R."/>
            <person name="Clayton R.A."/>
            <person name="Sutton G.G."/>
            <person name="Fleischmann R.D."/>
            <person name="Ketchum K.A."/>
            <person name="Klenk H.-P."/>
            <person name="Gill S.R."/>
            <person name="Dougherty B.A."/>
            <person name="Nelson K.E."/>
            <person name="Quackenbush J."/>
            <person name="Zhou L."/>
            <person name="Kirkness E.F."/>
            <person name="Peterson S.N."/>
            <person name="Loftus B.J."/>
            <person name="Richardson D.L."/>
            <person name="Dodson R.J."/>
            <person name="Khalak H.G."/>
            <person name="Glodek A."/>
            <person name="McKenney K."/>
            <person name="FitzGerald L.M."/>
            <person name="Lee N."/>
            <person name="Adams M.D."/>
            <person name="Hickey E.K."/>
            <person name="Berg D.E."/>
            <person name="Gocayne J.D."/>
            <person name="Utterback T.R."/>
            <person name="Peterson J.D."/>
            <person name="Kelley J.M."/>
            <person name="Cotton M.D."/>
            <person name="Weidman J.F."/>
            <person name="Fujii C."/>
            <person name="Bowman C."/>
            <person name="Watthey L."/>
            <person name="Wallin E."/>
            <person name="Hayes W.S."/>
            <person name="Borodovsky M."/>
            <person name="Karp P.D."/>
            <person name="Smith H.O."/>
            <person name="Fraser C.M."/>
            <person name="Venter J.C."/>
        </authorList>
    </citation>
    <scope>NUCLEOTIDE SEQUENCE [LARGE SCALE GENOMIC DNA]</scope>
    <source>
        <strain>ATCC 700392 / 26695</strain>
    </source>
</reference>
<protein>
    <recommendedName>
        <fullName>Trigger factor</fullName>
        <shortName>TF</shortName>
        <ecNumber>5.2.1.8</ecNumber>
    </recommendedName>
    <alternativeName>
        <fullName>PPIase</fullName>
    </alternativeName>
</protein>
<keyword id="KW-0131">Cell cycle</keyword>
<keyword id="KW-0132">Cell division</keyword>
<keyword id="KW-0143">Chaperone</keyword>
<keyword id="KW-0963">Cytoplasm</keyword>
<keyword id="KW-0413">Isomerase</keyword>
<keyword id="KW-1185">Reference proteome</keyword>
<keyword id="KW-0697">Rotamase</keyword>
<evidence type="ECO:0000250" key="1"/>
<evidence type="ECO:0000305" key="2"/>
<name>TIG_HELPY</name>
<gene>
    <name type="primary">tig</name>
    <name type="ordered locus">HP_0795</name>
</gene>
<accession>P56420</accession>
<sequence length="451" mass="51989">MNLEVKKIDTANARLSAKLSIENLEKRYDKIAQKIAQKVKIDGFRRGKVPLSLVKTRYQAQIEQDAQEEMIQEVLKNAFKELGIENKDLIGSPNLTKFEKKDTHFEIEADIGLKPTIVLDKIKECVPSVGVEVPNEEKIDERLKQLAKDYAKFVDTNTQRKAQNDDKLTIDFEGFIDNAPFEGGKAENFNLILGSKQMLEDFEKALLGMQAGEEKEFPLTFPSKYHAEHLAGKEAFFKVKLHQIQAREMLEINDELAKIVLANEENATLKLLKERVEGQLFLENKARLYNEELKEKLIENLDEKIVFDLPKTIIEQEMDLLFRNALYSMQAEEVKSLQESQEKAKEKRESFRNDATKSVKITFIIDALAKEEKIGVHDNEVFQTLYYEAMMTGQNPENLIEQYRKNNMLAAVKMAMIEDRVLAYLLDKNLPKEQQEILEKMRPNAQKIQAG</sequence>
<feature type="chain" id="PRO_0000179363" description="Trigger factor">
    <location>
        <begin position="1"/>
        <end position="451"/>
    </location>
</feature>
<feature type="domain" description="PPIase FKBP-type">
    <location>
        <begin position="165"/>
        <end position="250"/>
    </location>
</feature>
<comment type="function">
    <text evidence="1">Involved in protein export. Acts as a chaperone by maintaining the newly synthesized protein in an open conformation. Functions as a peptidyl-prolyl cis-trans isomerase (By similarity).</text>
</comment>
<comment type="catalytic activity">
    <reaction>
        <text>[protein]-peptidylproline (omega=180) = [protein]-peptidylproline (omega=0)</text>
        <dbReference type="Rhea" id="RHEA:16237"/>
        <dbReference type="Rhea" id="RHEA-COMP:10747"/>
        <dbReference type="Rhea" id="RHEA-COMP:10748"/>
        <dbReference type="ChEBI" id="CHEBI:83833"/>
        <dbReference type="ChEBI" id="CHEBI:83834"/>
        <dbReference type="EC" id="5.2.1.8"/>
    </reaction>
</comment>
<comment type="subcellular location">
    <subcellularLocation>
        <location>Cytoplasm</location>
    </subcellularLocation>
    <text evidence="1">About half TF is bound to the ribosome near the polypeptide exit tunnel while the other half is free in the cytoplasm.</text>
</comment>
<comment type="domain">
    <text evidence="1">Consists of 3 domains; the N-terminus binds the ribosome, the middle domain has PPIase activity, while the C-terminus has intrinsic chaperone activity on its own.</text>
</comment>
<comment type="similarity">
    <text evidence="2">Belongs to the FKBP-type PPIase family. Tig subfamily.</text>
</comment>
<proteinExistence type="inferred from homology"/>
<organism>
    <name type="scientific">Helicobacter pylori (strain ATCC 700392 / 26695)</name>
    <name type="common">Campylobacter pylori</name>
    <dbReference type="NCBI Taxonomy" id="85962"/>
    <lineage>
        <taxon>Bacteria</taxon>
        <taxon>Pseudomonadati</taxon>
        <taxon>Campylobacterota</taxon>
        <taxon>Epsilonproteobacteria</taxon>
        <taxon>Campylobacterales</taxon>
        <taxon>Helicobacteraceae</taxon>
        <taxon>Helicobacter</taxon>
    </lineage>
</organism>